<evidence type="ECO:0000255" key="1">
    <source>
        <dbReference type="HAMAP-Rule" id="MF_01058"/>
    </source>
</evidence>
<evidence type="ECO:0000256" key="2">
    <source>
        <dbReference type="SAM" id="MobiDB-lite"/>
    </source>
</evidence>
<name>YIHI_VIBCH</name>
<keyword id="KW-0343">GTPase activation</keyword>
<keyword id="KW-1185">Reference proteome</keyword>
<keyword id="KW-0690">Ribosome biogenesis</keyword>
<feature type="chain" id="PRO_0000209595" description="Der GTPase-activating protein YihI">
    <location>
        <begin position="1"/>
        <end position="182"/>
    </location>
</feature>
<feature type="region of interest" description="Disordered" evidence="2">
    <location>
        <begin position="1"/>
        <end position="79"/>
    </location>
</feature>
<feature type="region of interest" description="Disordered" evidence="2">
    <location>
        <begin position="143"/>
        <end position="182"/>
    </location>
</feature>
<feature type="compositionally biased region" description="Basic and acidic residues" evidence="2">
    <location>
        <begin position="23"/>
        <end position="32"/>
    </location>
</feature>
<feature type="compositionally biased region" description="Basic residues" evidence="2">
    <location>
        <begin position="33"/>
        <end position="47"/>
    </location>
</feature>
<accession>Q9KVM7</accession>
<organism>
    <name type="scientific">Vibrio cholerae serotype O1 (strain ATCC 39315 / El Tor Inaba N16961)</name>
    <dbReference type="NCBI Taxonomy" id="243277"/>
    <lineage>
        <taxon>Bacteria</taxon>
        <taxon>Pseudomonadati</taxon>
        <taxon>Pseudomonadota</taxon>
        <taxon>Gammaproteobacteria</taxon>
        <taxon>Vibrionales</taxon>
        <taxon>Vibrionaceae</taxon>
        <taxon>Vibrio</taxon>
    </lineage>
</organism>
<reference key="1">
    <citation type="journal article" date="2000" name="Nature">
        <title>DNA sequence of both chromosomes of the cholera pathogen Vibrio cholerae.</title>
        <authorList>
            <person name="Heidelberg J.F."/>
            <person name="Eisen J.A."/>
            <person name="Nelson W.C."/>
            <person name="Clayton R.A."/>
            <person name="Gwinn M.L."/>
            <person name="Dodson R.J."/>
            <person name="Haft D.H."/>
            <person name="Hickey E.K."/>
            <person name="Peterson J.D."/>
            <person name="Umayam L.A."/>
            <person name="Gill S.R."/>
            <person name="Nelson K.E."/>
            <person name="Read T.D."/>
            <person name="Tettelin H."/>
            <person name="Richardson D.L."/>
            <person name="Ermolaeva M.D."/>
            <person name="Vamathevan J.J."/>
            <person name="Bass S."/>
            <person name="Qin H."/>
            <person name="Dragoi I."/>
            <person name="Sellers P."/>
            <person name="McDonald L.A."/>
            <person name="Utterback T.R."/>
            <person name="Fleischmann R.D."/>
            <person name="Nierman W.C."/>
            <person name="White O."/>
            <person name="Salzberg S.L."/>
            <person name="Smith H.O."/>
            <person name="Colwell R.R."/>
            <person name="Mekalanos J.J."/>
            <person name="Venter J.C."/>
            <person name="Fraser C.M."/>
        </authorList>
    </citation>
    <scope>NUCLEOTIDE SEQUENCE [LARGE SCALE GENOMIC DNA]</scope>
    <source>
        <strain>ATCC 39315 / El Tor Inaba N16961</strain>
    </source>
</reference>
<gene>
    <name evidence="1" type="primary">yihI</name>
    <name type="ordered locus">VC_0114</name>
</gene>
<comment type="function">
    <text evidence="1">A GTPase-activating protein (GAP) that modifies Der/EngA GTPase function. May play a role in ribosome biogenesis.</text>
</comment>
<comment type="subunit">
    <text evidence="1">Interacts with Der.</text>
</comment>
<comment type="similarity">
    <text evidence="1">Belongs to the YihI family.</text>
</comment>
<dbReference type="EMBL" id="AE003852">
    <property type="protein sequence ID" value="AAF93292.1"/>
    <property type="molecule type" value="Genomic_DNA"/>
</dbReference>
<dbReference type="PIR" id="H82361">
    <property type="entry name" value="H82361"/>
</dbReference>
<dbReference type="RefSeq" id="NP_229773.1">
    <property type="nucleotide sequence ID" value="NC_002505.1"/>
</dbReference>
<dbReference type="RefSeq" id="WP_000091428.1">
    <property type="nucleotide sequence ID" value="NZ_LT906614.1"/>
</dbReference>
<dbReference type="SMR" id="Q9KVM7"/>
<dbReference type="STRING" id="243277.VC_0114"/>
<dbReference type="DNASU" id="2614424"/>
<dbReference type="EnsemblBacteria" id="AAF93292">
    <property type="protein sequence ID" value="AAF93292"/>
    <property type="gene ID" value="VC_0114"/>
</dbReference>
<dbReference type="GeneID" id="69718602"/>
<dbReference type="KEGG" id="vch:VC_0114"/>
<dbReference type="PATRIC" id="fig|243277.26.peg.105"/>
<dbReference type="eggNOG" id="COG3078">
    <property type="taxonomic scope" value="Bacteria"/>
</dbReference>
<dbReference type="HOGENOM" id="CLU_094104_1_0_6"/>
<dbReference type="Proteomes" id="UP000000584">
    <property type="component" value="Chromosome 1"/>
</dbReference>
<dbReference type="GO" id="GO:0005096">
    <property type="term" value="F:GTPase activator activity"/>
    <property type="evidence" value="ECO:0007669"/>
    <property type="project" value="UniProtKB-KW"/>
</dbReference>
<dbReference type="GO" id="GO:0042254">
    <property type="term" value="P:ribosome biogenesis"/>
    <property type="evidence" value="ECO:0007669"/>
    <property type="project" value="UniProtKB-KW"/>
</dbReference>
<dbReference type="HAMAP" id="MF_01058">
    <property type="entry name" value="GAP_YihI"/>
    <property type="match status" value="1"/>
</dbReference>
<dbReference type="InterPro" id="IPR007336">
    <property type="entry name" value="YihI"/>
</dbReference>
<dbReference type="NCBIfam" id="NF003560">
    <property type="entry name" value="PRK05244.1-1"/>
    <property type="match status" value="1"/>
</dbReference>
<dbReference type="Pfam" id="PF04220">
    <property type="entry name" value="YihI"/>
    <property type="match status" value="1"/>
</dbReference>
<protein>
    <recommendedName>
        <fullName evidence="1">Der GTPase-activating protein YihI</fullName>
    </recommendedName>
</protein>
<proteinExistence type="inferred from homology"/>
<sequence length="182" mass="20751">MSRSKKSRKPGTNSNDQLVVVRTRSESELESRLRKKLKKRKGLKSGSRHSEGSESQVRQAAQKRDPRLGSKKPIPLIVAEPKKLNKQERKLAAEQELAMLEKDAQLNVLLDRLDNGEKLGIGLQKYVDEKLDRIEVLMEQLGLLDDEPEPAPAPQSKPTKKRKTEDDLLSEFEQLDVDKYQD</sequence>